<dbReference type="EC" id="6.3.4.20" evidence="1"/>
<dbReference type="EMBL" id="AE002098">
    <property type="protein sequence ID" value="AAF40955.1"/>
    <property type="molecule type" value="Genomic_DNA"/>
</dbReference>
<dbReference type="PIR" id="E81189">
    <property type="entry name" value="E81189"/>
</dbReference>
<dbReference type="RefSeq" id="NP_273570.1">
    <property type="nucleotide sequence ID" value="NC_003112.2"/>
</dbReference>
<dbReference type="RefSeq" id="WP_002225597.1">
    <property type="nucleotide sequence ID" value="NC_003112.2"/>
</dbReference>
<dbReference type="SMR" id="Q9K0Q9"/>
<dbReference type="FunCoup" id="Q9K0Q9">
    <property type="interactions" value="154"/>
</dbReference>
<dbReference type="STRING" id="122586.NMB0525"/>
<dbReference type="PaxDb" id="122586-NMB0525"/>
<dbReference type="KEGG" id="nme:NMB0525"/>
<dbReference type="PATRIC" id="fig|122586.8.peg.667"/>
<dbReference type="HOGENOM" id="CLU_081854_0_0_4"/>
<dbReference type="InParanoid" id="Q9K0Q9"/>
<dbReference type="OrthoDB" id="9789567at2"/>
<dbReference type="UniPathway" id="UPA00391"/>
<dbReference type="Proteomes" id="UP000000425">
    <property type="component" value="Chromosome"/>
</dbReference>
<dbReference type="GO" id="GO:0005524">
    <property type="term" value="F:ATP binding"/>
    <property type="evidence" value="ECO:0007669"/>
    <property type="project" value="UniProtKB-UniRule"/>
</dbReference>
<dbReference type="GO" id="GO:0016879">
    <property type="term" value="F:ligase activity, forming carbon-nitrogen bonds"/>
    <property type="evidence" value="ECO:0007669"/>
    <property type="project" value="UniProtKB-UniRule"/>
</dbReference>
<dbReference type="GO" id="GO:0008270">
    <property type="term" value="F:zinc ion binding"/>
    <property type="evidence" value="ECO:0007669"/>
    <property type="project" value="UniProtKB-UniRule"/>
</dbReference>
<dbReference type="GO" id="GO:0008616">
    <property type="term" value="P:queuosine biosynthetic process"/>
    <property type="evidence" value="ECO:0007669"/>
    <property type="project" value="UniProtKB-UniRule"/>
</dbReference>
<dbReference type="CDD" id="cd01995">
    <property type="entry name" value="QueC-like"/>
    <property type="match status" value="1"/>
</dbReference>
<dbReference type="FunFam" id="3.40.50.620:FF:000017">
    <property type="entry name" value="7-cyano-7-deazaguanine synthase"/>
    <property type="match status" value="1"/>
</dbReference>
<dbReference type="Gene3D" id="3.40.50.620">
    <property type="entry name" value="HUPs"/>
    <property type="match status" value="1"/>
</dbReference>
<dbReference type="HAMAP" id="MF_01633">
    <property type="entry name" value="QueC"/>
    <property type="match status" value="1"/>
</dbReference>
<dbReference type="InterPro" id="IPR018317">
    <property type="entry name" value="QueC"/>
</dbReference>
<dbReference type="InterPro" id="IPR014729">
    <property type="entry name" value="Rossmann-like_a/b/a_fold"/>
</dbReference>
<dbReference type="NCBIfam" id="TIGR00364">
    <property type="entry name" value="7-cyano-7-deazaguanine synthase QueC"/>
    <property type="match status" value="1"/>
</dbReference>
<dbReference type="PANTHER" id="PTHR42914">
    <property type="entry name" value="7-CYANO-7-DEAZAGUANINE SYNTHASE"/>
    <property type="match status" value="1"/>
</dbReference>
<dbReference type="PANTHER" id="PTHR42914:SF1">
    <property type="entry name" value="7-CYANO-7-DEAZAGUANINE SYNTHASE"/>
    <property type="match status" value="1"/>
</dbReference>
<dbReference type="Pfam" id="PF06508">
    <property type="entry name" value="QueC"/>
    <property type="match status" value="1"/>
</dbReference>
<dbReference type="PIRSF" id="PIRSF006293">
    <property type="entry name" value="ExsB"/>
    <property type="match status" value="1"/>
</dbReference>
<dbReference type="SUPFAM" id="SSF52402">
    <property type="entry name" value="Adenine nucleotide alpha hydrolases-like"/>
    <property type="match status" value="1"/>
</dbReference>
<protein>
    <recommendedName>
        <fullName evidence="1">7-cyano-7-deazaguanine synthase</fullName>
        <ecNumber evidence="1">6.3.4.20</ecNumber>
    </recommendedName>
    <alternativeName>
        <fullName evidence="1">7-cyano-7-carbaguanine synthase</fullName>
    </alternativeName>
    <alternativeName>
        <fullName evidence="1">PreQ(0) synthase</fullName>
    </alternativeName>
    <alternativeName>
        <fullName evidence="1">Queuosine biosynthesis protein QueC</fullName>
    </alternativeName>
</protein>
<sequence length="219" mass="24473">MSNQQALVIFSGGQDSTTCLIQAIQTYGRENVQAITFQYGQRHAVELERARWIAQDLGVKQTVLDLSLMRQITHNALMDDTAAIETAENGVPNTFVDGRNALFLLYAAIYAKGQGIRHIIAGVCETDFSGYPDCRDVFVKSMNVTLNLAMDYDFQIHTPLMYLTKAQTWALADEMGVLDYIREQTHTCYNGIVGGCRECPSCILRERGLAEYLESKKAV</sequence>
<gene>
    <name evidence="1" type="primary">queC</name>
    <name type="ordered locus">NMB0525</name>
</gene>
<name>QUEC_NEIMB</name>
<organism>
    <name type="scientific">Neisseria meningitidis serogroup B (strain ATCC BAA-335 / MC58)</name>
    <dbReference type="NCBI Taxonomy" id="122586"/>
    <lineage>
        <taxon>Bacteria</taxon>
        <taxon>Pseudomonadati</taxon>
        <taxon>Pseudomonadota</taxon>
        <taxon>Betaproteobacteria</taxon>
        <taxon>Neisseriales</taxon>
        <taxon>Neisseriaceae</taxon>
        <taxon>Neisseria</taxon>
    </lineage>
</organism>
<comment type="function">
    <text evidence="1">Catalyzes the ATP-dependent conversion of 7-carboxy-7-deazaguanine (CDG) to 7-cyano-7-deazaguanine (preQ(0)).</text>
</comment>
<comment type="catalytic activity">
    <reaction evidence="1">
        <text>7-carboxy-7-deazaguanine + NH4(+) + ATP = 7-cyano-7-deazaguanine + ADP + phosphate + H2O + H(+)</text>
        <dbReference type="Rhea" id="RHEA:27982"/>
        <dbReference type="ChEBI" id="CHEBI:15377"/>
        <dbReference type="ChEBI" id="CHEBI:15378"/>
        <dbReference type="ChEBI" id="CHEBI:28938"/>
        <dbReference type="ChEBI" id="CHEBI:30616"/>
        <dbReference type="ChEBI" id="CHEBI:43474"/>
        <dbReference type="ChEBI" id="CHEBI:45075"/>
        <dbReference type="ChEBI" id="CHEBI:61036"/>
        <dbReference type="ChEBI" id="CHEBI:456216"/>
        <dbReference type="EC" id="6.3.4.20"/>
    </reaction>
</comment>
<comment type="cofactor">
    <cofactor evidence="1">
        <name>Zn(2+)</name>
        <dbReference type="ChEBI" id="CHEBI:29105"/>
    </cofactor>
    <text evidence="1">Binds 1 zinc ion per subunit.</text>
</comment>
<comment type="pathway">
    <text evidence="1">Purine metabolism; 7-cyano-7-deazaguanine biosynthesis.</text>
</comment>
<comment type="similarity">
    <text evidence="1">Belongs to the QueC family.</text>
</comment>
<reference key="1">
    <citation type="journal article" date="2000" name="Science">
        <title>Complete genome sequence of Neisseria meningitidis serogroup B strain MC58.</title>
        <authorList>
            <person name="Tettelin H."/>
            <person name="Saunders N.J."/>
            <person name="Heidelberg J.F."/>
            <person name="Jeffries A.C."/>
            <person name="Nelson K.E."/>
            <person name="Eisen J.A."/>
            <person name="Ketchum K.A."/>
            <person name="Hood D.W."/>
            <person name="Peden J.F."/>
            <person name="Dodson R.J."/>
            <person name="Nelson W.C."/>
            <person name="Gwinn M.L."/>
            <person name="DeBoy R.T."/>
            <person name="Peterson J.D."/>
            <person name="Hickey E.K."/>
            <person name="Haft D.H."/>
            <person name="Salzberg S.L."/>
            <person name="White O."/>
            <person name="Fleischmann R.D."/>
            <person name="Dougherty B.A."/>
            <person name="Mason T.M."/>
            <person name="Ciecko A."/>
            <person name="Parksey D.S."/>
            <person name="Blair E."/>
            <person name="Cittone H."/>
            <person name="Clark E.B."/>
            <person name="Cotton M.D."/>
            <person name="Utterback T.R."/>
            <person name="Khouri H.M."/>
            <person name="Qin H."/>
            <person name="Vamathevan J.J."/>
            <person name="Gill J."/>
            <person name="Scarlato V."/>
            <person name="Masignani V."/>
            <person name="Pizza M."/>
            <person name="Grandi G."/>
            <person name="Sun L."/>
            <person name="Smith H.O."/>
            <person name="Fraser C.M."/>
            <person name="Moxon E.R."/>
            <person name="Rappuoli R."/>
            <person name="Venter J.C."/>
        </authorList>
    </citation>
    <scope>NUCLEOTIDE SEQUENCE [LARGE SCALE GENOMIC DNA]</scope>
    <source>
        <strain>ATCC BAA-335 / MC58</strain>
    </source>
</reference>
<keyword id="KW-0067">ATP-binding</keyword>
<keyword id="KW-0436">Ligase</keyword>
<keyword id="KW-0479">Metal-binding</keyword>
<keyword id="KW-0547">Nucleotide-binding</keyword>
<keyword id="KW-0671">Queuosine biosynthesis</keyword>
<keyword id="KW-1185">Reference proteome</keyword>
<keyword id="KW-0862">Zinc</keyword>
<accession>Q9K0Q9</accession>
<evidence type="ECO:0000255" key="1">
    <source>
        <dbReference type="HAMAP-Rule" id="MF_01633"/>
    </source>
</evidence>
<feature type="chain" id="PRO_0000246865" description="7-cyano-7-deazaguanine synthase">
    <location>
        <begin position="1"/>
        <end position="219"/>
    </location>
</feature>
<feature type="binding site" evidence="1">
    <location>
        <begin position="10"/>
        <end position="20"/>
    </location>
    <ligand>
        <name>ATP</name>
        <dbReference type="ChEBI" id="CHEBI:30616"/>
    </ligand>
</feature>
<feature type="binding site" evidence="1">
    <location>
        <position position="188"/>
    </location>
    <ligand>
        <name>Zn(2+)</name>
        <dbReference type="ChEBI" id="CHEBI:29105"/>
    </ligand>
</feature>
<feature type="binding site" evidence="1">
    <location>
        <position position="196"/>
    </location>
    <ligand>
        <name>Zn(2+)</name>
        <dbReference type="ChEBI" id="CHEBI:29105"/>
    </ligand>
</feature>
<feature type="binding site" evidence="1">
    <location>
        <position position="199"/>
    </location>
    <ligand>
        <name>Zn(2+)</name>
        <dbReference type="ChEBI" id="CHEBI:29105"/>
    </ligand>
</feature>
<feature type="binding site" evidence="1">
    <location>
        <position position="202"/>
    </location>
    <ligand>
        <name>Zn(2+)</name>
        <dbReference type="ChEBI" id="CHEBI:29105"/>
    </ligand>
</feature>
<proteinExistence type="inferred from homology"/>